<sequence>MSTIIMDLCSYTRLGLTGYLLSRGVKKREINDIETVDDLAIACDSQRPSVVFINEDCFIHDASNSQRIKLIINQHPNTLFIVFMAIANVHFDEYLLVRKNLLISSKSIKPESLDDILGDILKKETTITSFLNMPTLSLSRTESSMLRMWMAGQGTIQISDQMNIKAKTVSSHKGNIKRKIKTHNKQVIYHVVRLTDNVTNGIFVNMR</sequence>
<proteinExistence type="inferred from homology"/>
<gene>
    <name evidence="1" type="primary">rcsA</name>
    <name type="ordered locus">Z3041</name>
    <name type="ordered locus">ECs2690</name>
</gene>
<comment type="function">
    <text evidence="1">Component of the Rcs signaling system, which controls transcription of numerous genes. Binds, with RcsB, to the RcsAB box to regulate expression of genes.</text>
</comment>
<comment type="subunit">
    <text evidence="1">Interacts with RcsB.</text>
</comment>
<comment type="similarity">
    <text evidence="1">Belongs to the RcsA family.</text>
</comment>
<feature type="chain" id="PRO_0000184179" description="Transcriptional regulatory protein RcsA">
    <location>
        <begin position="1"/>
        <end position="207"/>
    </location>
</feature>
<feature type="domain" description="HTH luxR-type" evidence="1">
    <location>
        <begin position="131"/>
        <end position="196"/>
    </location>
</feature>
<feature type="DNA-binding region" description="H-T-H motif" evidence="1">
    <location>
        <begin position="155"/>
        <end position="174"/>
    </location>
</feature>
<name>RCSA_ECO57</name>
<dbReference type="EMBL" id="AE005174">
    <property type="protein sequence ID" value="AAG56966.1"/>
    <property type="molecule type" value="Genomic_DNA"/>
</dbReference>
<dbReference type="EMBL" id="BA000007">
    <property type="protein sequence ID" value="BAB36113.1"/>
    <property type="molecule type" value="Genomic_DNA"/>
</dbReference>
<dbReference type="PIR" id="B85813">
    <property type="entry name" value="B85813"/>
</dbReference>
<dbReference type="PIR" id="B90965">
    <property type="entry name" value="B90965"/>
</dbReference>
<dbReference type="RefSeq" id="NP_310717.1">
    <property type="nucleotide sequence ID" value="NC_002695.1"/>
</dbReference>
<dbReference type="RefSeq" id="WP_000104001.1">
    <property type="nucleotide sequence ID" value="NZ_VOAI01000028.1"/>
</dbReference>
<dbReference type="SMR" id="P69406"/>
<dbReference type="STRING" id="155864.Z3041"/>
<dbReference type="GeneID" id="913009"/>
<dbReference type="KEGG" id="ece:Z3041"/>
<dbReference type="KEGG" id="ecs:ECs_2690"/>
<dbReference type="PATRIC" id="fig|386585.9.peg.2818"/>
<dbReference type="eggNOG" id="COG2197">
    <property type="taxonomic scope" value="Bacteria"/>
</dbReference>
<dbReference type="HOGENOM" id="CLU_105065_0_0_6"/>
<dbReference type="OMA" id="MLRMWMS"/>
<dbReference type="Proteomes" id="UP000000558">
    <property type="component" value="Chromosome"/>
</dbReference>
<dbReference type="Proteomes" id="UP000002519">
    <property type="component" value="Chromosome"/>
</dbReference>
<dbReference type="GO" id="GO:0003677">
    <property type="term" value="F:DNA binding"/>
    <property type="evidence" value="ECO:0007669"/>
    <property type="project" value="UniProtKB-UniRule"/>
</dbReference>
<dbReference type="GO" id="GO:0006355">
    <property type="term" value="P:regulation of DNA-templated transcription"/>
    <property type="evidence" value="ECO:0007669"/>
    <property type="project" value="UniProtKB-UniRule"/>
</dbReference>
<dbReference type="CDD" id="cd06170">
    <property type="entry name" value="LuxR_C_like"/>
    <property type="match status" value="1"/>
</dbReference>
<dbReference type="FunFam" id="1.10.10.10:FF:000222">
    <property type="entry name" value="Transcriptional regulatory protein RcsA"/>
    <property type="match status" value="1"/>
</dbReference>
<dbReference type="Gene3D" id="1.10.10.10">
    <property type="entry name" value="Winged helix-like DNA-binding domain superfamily/Winged helix DNA-binding domain"/>
    <property type="match status" value="1"/>
</dbReference>
<dbReference type="HAMAP" id="MF_00982">
    <property type="entry name" value="RcsA"/>
    <property type="match status" value="1"/>
</dbReference>
<dbReference type="InterPro" id="IPR030866">
    <property type="entry name" value="RcsA"/>
</dbReference>
<dbReference type="InterPro" id="IPR016032">
    <property type="entry name" value="Sig_transdc_resp-reg_C-effctor"/>
</dbReference>
<dbReference type="InterPro" id="IPR000792">
    <property type="entry name" value="Tscrpt_reg_LuxR_C"/>
</dbReference>
<dbReference type="InterPro" id="IPR036388">
    <property type="entry name" value="WH-like_DNA-bd_sf"/>
</dbReference>
<dbReference type="NCBIfam" id="NF011940">
    <property type="entry name" value="PRK15411.1"/>
    <property type="match status" value="1"/>
</dbReference>
<dbReference type="Pfam" id="PF00196">
    <property type="entry name" value="GerE"/>
    <property type="match status" value="1"/>
</dbReference>
<dbReference type="PRINTS" id="PR00038">
    <property type="entry name" value="HTHLUXR"/>
</dbReference>
<dbReference type="SMART" id="SM00421">
    <property type="entry name" value="HTH_LUXR"/>
    <property type="match status" value="1"/>
</dbReference>
<dbReference type="SUPFAM" id="SSF46894">
    <property type="entry name" value="C-terminal effector domain of the bipartite response regulators"/>
    <property type="match status" value="1"/>
</dbReference>
<dbReference type="PROSITE" id="PS00622">
    <property type="entry name" value="HTH_LUXR_1"/>
    <property type="match status" value="1"/>
</dbReference>
<dbReference type="PROSITE" id="PS50043">
    <property type="entry name" value="HTH_LUXR_2"/>
    <property type="match status" value="1"/>
</dbReference>
<reference key="1">
    <citation type="journal article" date="2001" name="Nature">
        <title>Genome sequence of enterohaemorrhagic Escherichia coli O157:H7.</title>
        <authorList>
            <person name="Perna N.T."/>
            <person name="Plunkett G. III"/>
            <person name="Burland V."/>
            <person name="Mau B."/>
            <person name="Glasner J.D."/>
            <person name="Rose D.J."/>
            <person name="Mayhew G.F."/>
            <person name="Evans P.S."/>
            <person name="Gregor J."/>
            <person name="Kirkpatrick H.A."/>
            <person name="Posfai G."/>
            <person name="Hackett J."/>
            <person name="Klink S."/>
            <person name="Boutin A."/>
            <person name="Shao Y."/>
            <person name="Miller L."/>
            <person name="Grotbeck E.J."/>
            <person name="Davis N.W."/>
            <person name="Lim A."/>
            <person name="Dimalanta E.T."/>
            <person name="Potamousis K."/>
            <person name="Apodaca J."/>
            <person name="Anantharaman T.S."/>
            <person name="Lin J."/>
            <person name="Yen G."/>
            <person name="Schwartz D.C."/>
            <person name="Welch R.A."/>
            <person name="Blattner F.R."/>
        </authorList>
    </citation>
    <scope>NUCLEOTIDE SEQUENCE [LARGE SCALE GENOMIC DNA]</scope>
    <source>
        <strain>O157:H7 / EDL933 / ATCC 700927 / EHEC</strain>
    </source>
</reference>
<reference key="2">
    <citation type="journal article" date="2001" name="DNA Res.">
        <title>Complete genome sequence of enterohemorrhagic Escherichia coli O157:H7 and genomic comparison with a laboratory strain K-12.</title>
        <authorList>
            <person name="Hayashi T."/>
            <person name="Makino K."/>
            <person name="Ohnishi M."/>
            <person name="Kurokawa K."/>
            <person name="Ishii K."/>
            <person name="Yokoyama K."/>
            <person name="Han C.-G."/>
            <person name="Ohtsubo E."/>
            <person name="Nakayama K."/>
            <person name="Murata T."/>
            <person name="Tanaka M."/>
            <person name="Tobe T."/>
            <person name="Iida T."/>
            <person name="Takami H."/>
            <person name="Honda T."/>
            <person name="Sasakawa C."/>
            <person name="Ogasawara N."/>
            <person name="Yasunaga T."/>
            <person name="Kuhara S."/>
            <person name="Shiba T."/>
            <person name="Hattori M."/>
            <person name="Shinagawa H."/>
        </authorList>
    </citation>
    <scope>NUCLEOTIDE SEQUENCE [LARGE SCALE GENOMIC DNA]</scope>
    <source>
        <strain>O157:H7 / Sakai / RIMD 0509952 / EHEC</strain>
    </source>
</reference>
<organism>
    <name type="scientific">Escherichia coli O157:H7</name>
    <dbReference type="NCBI Taxonomy" id="83334"/>
    <lineage>
        <taxon>Bacteria</taxon>
        <taxon>Pseudomonadati</taxon>
        <taxon>Pseudomonadota</taxon>
        <taxon>Gammaproteobacteria</taxon>
        <taxon>Enterobacterales</taxon>
        <taxon>Enterobacteriaceae</taxon>
        <taxon>Escherichia</taxon>
    </lineage>
</organism>
<evidence type="ECO:0000255" key="1">
    <source>
        <dbReference type="HAMAP-Rule" id="MF_00982"/>
    </source>
</evidence>
<accession>P69406</accession>
<accession>P24210</accession>
<accession>Q47585</accession>
<protein>
    <recommendedName>
        <fullName evidence="1">Transcriptional regulatory protein RcsA</fullName>
    </recommendedName>
</protein>
<keyword id="KW-0238">DNA-binding</keyword>
<keyword id="KW-1185">Reference proteome</keyword>
<keyword id="KW-0716">Sensory transduction</keyword>
<keyword id="KW-0804">Transcription</keyword>
<keyword id="KW-0805">Transcription regulation</keyword>